<reference key="1">
    <citation type="journal article" date="1999" name="Cell">
        <title>A striking organization of a large family of human neural cadherin-like cell adhesion genes.</title>
        <authorList>
            <person name="Wu Q."/>
            <person name="Maniatis T."/>
        </authorList>
    </citation>
    <scope>NUCLEOTIDE SEQUENCE [MRNA] (ISOFORMS 1; 2 AND 3)</scope>
    <source>
        <tissue>Brain</tissue>
    </source>
</reference>
<reference key="2">
    <citation type="submission" date="2005-09" db="EMBL/GenBank/DDBJ databases">
        <authorList>
            <person name="Mural R.J."/>
            <person name="Istrail S."/>
            <person name="Sutton G.G."/>
            <person name="Florea L."/>
            <person name="Halpern A.L."/>
            <person name="Mobarry C.M."/>
            <person name="Lippert R."/>
            <person name="Walenz B."/>
            <person name="Shatkay H."/>
            <person name="Dew I."/>
            <person name="Miller J.R."/>
            <person name="Flanigan M.J."/>
            <person name="Edwards N.J."/>
            <person name="Bolanos R."/>
            <person name="Fasulo D."/>
            <person name="Halldorsson B.V."/>
            <person name="Hannenhalli S."/>
            <person name="Turner R."/>
            <person name="Yooseph S."/>
            <person name="Lu F."/>
            <person name="Nusskern D.R."/>
            <person name="Shue B.C."/>
            <person name="Zheng X.H."/>
            <person name="Zhong F."/>
            <person name="Delcher A.L."/>
            <person name="Huson D.H."/>
            <person name="Kravitz S.A."/>
            <person name="Mouchard L."/>
            <person name="Reinert K."/>
            <person name="Remington K.A."/>
            <person name="Clark A.G."/>
            <person name="Waterman M.S."/>
            <person name="Eichler E.E."/>
            <person name="Adams M.D."/>
            <person name="Hunkapiller M.W."/>
            <person name="Myers E.W."/>
            <person name="Venter J.C."/>
        </authorList>
    </citation>
    <scope>NUCLEOTIDE SEQUENCE [LARGE SCALE GENOMIC DNA]</scope>
</reference>
<reference key="3">
    <citation type="journal article" date="2004" name="Genome Res.">
        <title>The status, quality, and expansion of the NIH full-length cDNA project: the Mammalian Gene Collection (MGC).</title>
        <authorList>
            <consortium name="The MGC Project Team"/>
        </authorList>
    </citation>
    <scope>NUCLEOTIDE SEQUENCE [LARGE SCALE MRNA] (ISOFORM 1)</scope>
    <source>
        <tissue>Brain</tissue>
        <tissue>Testis</tissue>
    </source>
</reference>
<gene>
    <name type="primary">PCDHGA11</name>
</gene>
<sequence length="935" mass="101543">MANRLQRGDRSRLLLLLCIFLGTLRGFRARQIRYSVPEETEKGSFVGNISKDLGLEPRELAKRGVRIVSRGKTQLFAVNPRSGSLITAGRIDREELCETVSSCFLNMELLVEDTLKIYGVEVEIIDINDNAPSFQEDEVEIKVSEHAIPGARFALPNARDPDVGVNSLQSYQLSPNNYFSLQLRGRTDGAKNPELVLEGSLDREKEAAHLLLLTALDGGDPIRKGAVPIRVVVLDVNDHIPMFTQSVYRVSVPENISSGTRVLMVNATDPDEGINGEVMYSFRNMESKASEIFQLDSQTGEVQVRGSLDFEKYRFYEMEIQGQDGGGLFTTTTMLITVVDVNDNAPEITITSSINSILENSPPGTVIALLNVQDQDSGENGQVSCFIPNHLPFKLEKTYGNYYKLITSRVLDRELVQSYNITLTATDQGSPPLSAETHVWLNVADDNDNPPVFPHSSYSAYIPENNPRGASIFSVTALDPDSKQNALVTYSLTDDTVQGVPLSSYVSINSNTGVLYALQSFDYEQFRDLELRVIARDSGDPPLSSNVSLSLFVLDQNDNAPEILYPALPTDGSTGVELAPRSAEPGYLVTKVVAVDKDSGQNAWLSYRLLKASEPGLFAVGEHTGEVRTARALLDRDALKQSLVVAVQDHGQPPLSATVTLTVAVADSIPEVLADLGSLESLANSETSDLSLYLVVAVAAVSCIFLVFVIVLLALRLWRWHKSRLLQASEGGLAGMPTSHFVGVDGVQAFLQTYSHEVSLIADSQKSHLIFPQPNYGDTLISQESCEKSEPLLIAEDSAIILGKCDPTSNQQAPPNTDWRFSQAQRPGTSGSQNGDDTGTWPNNQFDTEMLQAMILASASEAADGSSTLGGGAGTMGLSARYGPQFTLQHVPDYRQNVYIPGSNATLTNAAGKRDGKAPAGGNGNKKKSGKKEKK</sequence>
<evidence type="ECO:0000250" key="1"/>
<evidence type="ECO:0000255" key="2"/>
<evidence type="ECO:0000255" key="3">
    <source>
        <dbReference type="PROSITE-ProRule" id="PRU00043"/>
    </source>
</evidence>
<evidence type="ECO:0000256" key="4">
    <source>
        <dbReference type="SAM" id="MobiDB-lite"/>
    </source>
</evidence>
<evidence type="ECO:0000303" key="5">
    <source>
    </source>
</evidence>
<accession>Q9Y5H2</accession>
<accession>B7ZVY8</accession>
<accession>Q9Y5D8</accession>
<accession>Q9Y5D9</accession>
<name>PCDGB_HUMAN</name>
<proteinExistence type="evidence at protein level"/>
<comment type="function">
    <text>Potential calcium-dependent cell-adhesion protein. May be involved in the establishment and maintenance of specific neuronal connections in the brain.</text>
</comment>
<comment type="subcellular location">
    <subcellularLocation>
        <location evidence="1">Cell membrane</location>
        <topology evidence="1">Single-pass type I membrane protein</topology>
    </subcellularLocation>
</comment>
<comment type="alternative products">
    <event type="alternative splicing"/>
    <isoform>
        <id>Q9Y5H2-1</id>
        <name>1</name>
        <sequence type="displayed"/>
    </isoform>
    <isoform>
        <id>Q9Y5H2-2</id>
        <name>2</name>
        <name>Short</name>
        <sequence type="described" ref="VSP_008680 VSP_008681"/>
    </isoform>
    <isoform>
        <id>Q9Y5H2-3</id>
        <name>3</name>
        <sequence type="described" ref="VSP_008679"/>
    </isoform>
</comment>
<protein>
    <recommendedName>
        <fullName>Protocadherin gamma-A11</fullName>
        <shortName>PCDH-gamma-A11</shortName>
    </recommendedName>
</protein>
<dbReference type="EMBL" id="AF152320">
    <property type="protein sequence ID" value="AAD43714.1"/>
    <property type="molecule type" value="mRNA"/>
</dbReference>
<dbReference type="EMBL" id="AF152505">
    <property type="protein sequence ID" value="AAD43766.1"/>
    <property type="molecule type" value="mRNA"/>
</dbReference>
<dbReference type="EMBL" id="AF152504">
    <property type="protein sequence ID" value="AAD43765.1"/>
    <property type="molecule type" value="mRNA"/>
</dbReference>
<dbReference type="EMBL" id="CH471062">
    <property type="protein sequence ID" value="EAW61934.1"/>
    <property type="molecule type" value="Genomic_DNA"/>
</dbReference>
<dbReference type="EMBL" id="BC136781">
    <property type="protein sequence ID" value="AAI36782.1"/>
    <property type="molecule type" value="mRNA"/>
</dbReference>
<dbReference type="EMBL" id="BC171774">
    <property type="protein sequence ID" value="AAI71774.1"/>
    <property type="molecule type" value="mRNA"/>
</dbReference>
<dbReference type="CCDS" id="CCDS47294.1">
    <molecule id="Q9Y5H2-1"/>
</dbReference>
<dbReference type="CCDS" id="CCDS54930.1">
    <molecule id="Q9Y5H2-3"/>
</dbReference>
<dbReference type="CCDS" id="CCDS75345.1">
    <molecule id="Q9Y5H2-2"/>
</dbReference>
<dbReference type="RefSeq" id="NP_061737.1">
    <molecule id="Q9Y5H2-1"/>
    <property type="nucleotide sequence ID" value="NM_018914.3"/>
</dbReference>
<dbReference type="RefSeq" id="NP_114480.1">
    <molecule id="Q9Y5H2-2"/>
    <property type="nucleotide sequence ID" value="NM_032091.2"/>
</dbReference>
<dbReference type="RefSeq" id="NP_114481.1">
    <molecule id="Q9Y5H2-3"/>
    <property type="nucleotide sequence ID" value="NM_032092.2"/>
</dbReference>
<dbReference type="SMR" id="Q9Y5H2"/>
<dbReference type="BioGRID" id="121045">
    <property type="interactions" value="20"/>
</dbReference>
<dbReference type="FunCoup" id="Q9Y5H2">
    <property type="interactions" value="255"/>
</dbReference>
<dbReference type="IntAct" id="Q9Y5H2">
    <property type="interactions" value="16"/>
</dbReference>
<dbReference type="STRING" id="9606.ENSP00000381589"/>
<dbReference type="GlyCosmos" id="Q9Y5H2">
    <property type="glycosylation" value="5 sites, No reported glycans"/>
</dbReference>
<dbReference type="GlyGen" id="Q9Y5H2">
    <property type="glycosylation" value="5 sites, 1 N-linked glycan (2 sites)"/>
</dbReference>
<dbReference type="iPTMnet" id="Q9Y5H2"/>
<dbReference type="PhosphoSitePlus" id="Q9Y5H2"/>
<dbReference type="BioMuta" id="PCDHGA11"/>
<dbReference type="DMDM" id="37999842"/>
<dbReference type="jPOST" id="Q9Y5H2"/>
<dbReference type="MassIVE" id="Q9Y5H2"/>
<dbReference type="PaxDb" id="9606-ENSP00000381589"/>
<dbReference type="PeptideAtlas" id="Q9Y5H2"/>
<dbReference type="ProteomicsDB" id="86385">
    <molecule id="Q9Y5H2-1"/>
</dbReference>
<dbReference type="ProteomicsDB" id="86386">
    <molecule id="Q9Y5H2-2"/>
</dbReference>
<dbReference type="ProteomicsDB" id="86387">
    <molecule id="Q9Y5H2-3"/>
</dbReference>
<dbReference type="Antibodypedia" id="57509">
    <property type="antibodies" value="11 antibodies from 7 providers"/>
</dbReference>
<dbReference type="DNASU" id="56105"/>
<dbReference type="Ensembl" id="ENST00000398587.7">
    <molecule id="Q9Y5H2-1"/>
    <property type="protein sequence ID" value="ENSP00000381589.2"/>
    <property type="gene ID" value="ENSG00000253873.6"/>
</dbReference>
<dbReference type="Ensembl" id="ENST00000518882.2">
    <molecule id="Q9Y5H2-3"/>
    <property type="protein sequence ID" value="ENSP00000428333.1"/>
    <property type="gene ID" value="ENSG00000253873.6"/>
</dbReference>
<dbReference type="Ensembl" id="ENST00000622044.1">
    <molecule id="Q9Y5H2-2"/>
    <property type="protein sequence ID" value="ENSP00000480917.1"/>
    <property type="gene ID" value="ENSG00000253873.6"/>
</dbReference>
<dbReference type="GeneID" id="56105"/>
<dbReference type="KEGG" id="hsa:56105"/>
<dbReference type="MANE-Select" id="ENST00000398587.7">
    <property type="protein sequence ID" value="ENSP00000381589.2"/>
    <property type="RefSeq nucleotide sequence ID" value="NM_018914.3"/>
    <property type="RefSeq protein sequence ID" value="NP_061737.1"/>
</dbReference>
<dbReference type="UCSC" id="uc003lko.2">
    <molecule id="Q9Y5H2-1"/>
    <property type="organism name" value="human"/>
</dbReference>
<dbReference type="AGR" id="HGNC:8698"/>
<dbReference type="CTD" id="56105"/>
<dbReference type="DisGeNET" id="56105"/>
<dbReference type="GeneCards" id="PCDHGA11"/>
<dbReference type="HGNC" id="HGNC:8698">
    <property type="gene designation" value="PCDHGA11"/>
</dbReference>
<dbReference type="HPA" id="ENSG00000253873">
    <property type="expression patterns" value="Low tissue specificity"/>
</dbReference>
<dbReference type="MalaCards" id="PCDHGA11"/>
<dbReference type="MIM" id="604968">
    <property type="type" value="gene"/>
</dbReference>
<dbReference type="MIM" id="606298">
    <property type="type" value="gene"/>
</dbReference>
<dbReference type="neXtProt" id="NX_Q9Y5H2"/>
<dbReference type="OpenTargets" id="ENSG00000253873"/>
<dbReference type="PharmGKB" id="PA33046"/>
<dbReference type="VEuPathDB" id="HostDB:ENSG00000253873"/>
<dbReference type="eggNOG" id="KOG3594">
    <property type="taxonomic scope" value="Eukaryota"/>
</dbReference>
<dbReference type="GeneTree" id="ENSGT00940000164062"/>
<dbReference type="HOGENOM" id="CLU_006480_3_0_1"/>
<dbReference type="InParanoid" id="Q9Y5H2"/>
<dbReference type="OMA" id="QIHYSIS"/>
<dbReference type="OrthoDB" id="6252479at2759"/>
<dbReference type="PAN-GO" id="Q9Y5H2">
    <property type="GO annotations" value="2 GO annotations based on evolutionary models"/>
</dbReference>
<dbReference type="PhylomeDB" id="Q9Y5H2"/>
<dbReference type="TreeFam" id="TF332299"/>
<dbReference type="PathwayCommons" id="Q9Y5H2"/>
<dbReference type="SignaLink" id="Q9Y5H2"/>
<dbReference type="SIGNOR" id="Q9Y5H2"/>
<dbReference type="BioGRID-ORCS" id="56105">
    <property type="hits" value="6 hits in 1089 CRISPR screens"/>
</dbReference>
<dbReference type="GeneWiki" id="PCDHGA11"/>
<dbReference type="GenomeRNAi" id="56105"/>
<dbReference type="Pharos" id="Q9Y5H2">
    <property type="development level" value="Tdark"/>
</dbReference>
<dbReference type="PRO" id="PR:Q9Y5H2"/>
<dbReference type="Proteomes" id="UP000005640">
    <property type="component" value="Chromosome 5"/>
</dbReference>
<dbReference type="RNAct" id="Q9Y5H2">
    <property type="molecule type" value="protein"/>
</dbReference>
<dbReference type="Bgee" id="ENSG00000253873">
    <property type="expression patterns" value="Expressed in male germ line stem cell (sensu Vertebrata) in testis and 95 other cell types or tissues"/>
</dbReference>
<dbReference type="GO" id="GO:0005886">
    <property type="term" value="C:plasma membrane"/>
    <property type="evidence" value="ECO:0000318"/>
    <property type="project" value="GO_Central"/>
</dbReference>
<dbReference type="GO" id="GO:0005509">
    <property type="term" value="F:calcium ion binding"/>
    <property type="evidence" value="ECO:0007669"/>
    <property type="project" value="InterPro"/>
</dbReference>
<dbReference type="GO" id="GO:0007155">
    <property type="term" value="P:cell adhesion"/>
    <property type="evidence" value="ECO:0000318"/>
    <property type="project" value="GO_Central"/>
</dbReference>
<dbReference type="GO" id="GO:0007156">
    <property type="term" value="P:homophilic cell adhesion via plasma membrane adhesion molecules"/>
    <property type="evidence" value="ECO:0007669"/>
    <property type="project" value="InterPro"/>
</dbReference>
<dbReference type="GO" id="GO:0007399">
    <property type="term" value="P:nervous system development"/>
    <property type="evidence" value="ECO:0007669"/>
    <property type="project" value="UniProtKB-ARBA"/>
</dbReference>
<dbReference type="CDD" id="cd11304">
    <property type="entry name" value="Cadherin_repeat"/>
    <property type="match status" value="6"/>
</dbReference>
<dbReference type="FunFam" id="2.60.40.60:FF:000004">
    <property type="entry name" value="Protocadherin 1 gamma 2"/>
    <property type="match status" value="1"/>
</dbReference>
<dbReference type="FunFam" id="2.60.40.60:FF:000001">
    <property type="entry name" value="Protocadherin alpha 2"/>
    <property type="match status" value="1"/>
</dbReference>
<dbReference type="FunFam" id="2.60.40.60:FF:000002">
    <property type="entry name" value="Protocadherin alpha 2"/>
    <property type="match status" value="1"/>
</dbReference>
<dbReference type="FunFam" id="2.60.40.60:FF:000006">
    <property type="entry name" value="Protocadherin alpha 2"/>
    <property type="match status" value="1"/>
</dbReference>
<dbReference type="FunFam" id="2.60.40.60:FF:000129">
    <property type="entry name" value="protocadherin alpha-C2 isoform X1"/>
    <property type="match status" value="1"/>
</dbReference>
<dbReference type="FunFam" id="2.60.40.60:FF:000018">
    <property type="entry name" value="Protocadherin gamma c3"/>
    <property type="match status" value="1"/>
</dbReference>
<dbReference type="Gene3D" id="2.60.40.60">
    <property type="entry name" value="Cadherins"/>
    <property type="match status" value="6"/>
</dbReference>
<dbReference type="InterPro" id="IPR002126">
    <property type="entry name" value="Cadherin-like_dom"/>
</dbReference>
<dbReference type="InterPro" id="IPR015919">
    <property type="entry name" value="Cadherin-like_sf"/>
</dbReference>
<dbReference type="InterPro" id="IPR032455">
    <property type="entry name" value="Cadherin_C"/>
</dbReference>
<dbReference type="InterPro" id="IPR031904">
    <property type="entry name" value="Cadherin_CBD"/>
</dbReference>
<dbReference type="InterPro" id="IPR020894">
    <property type="entry name" value="Cadherin_CS"/>
</dbReference>
<dbReference type="InterPro" id="IPR013164">
    <property type="entry name" value="Cadherin_N"/>
</dbReference>
<dbReference type="InterPro" id="IPR050174">
    <property type="entry name" value="Protocadherin/Cadherin-CA"/>
</dbReference>
<dbReference type="PANTHER" id="PTHR24028">
    <property type="entry name" value="CADHERIN-87A"/>
    <property type="match status" value="1"/>
</dbReference>
<dbReference type="PANTHER" id="PTHR24028:SF84">
    <property type="entry name" value="PROTOCADHERIN GAMMA-A11"/>
    <property type="match status" value="1"/>
</dbReference>
<dbReference type="Pfam" id="PF00028">
    <property type="entry name" value="Cadherin"/>
    <property type="match status" value="4"/>
</dbReference>
<dbReference type="Pfam" id="PF08266">
    <property type="entry name" value="Cadherin_2"/>
    <property type="match status" value="1"/>
</dbReference>
<dbReference type="Pfam" id="PF16492">
    <property type="entry name" value="Cadherin_C_2"/>
    <property type="match status" value="1"/>
</dbReference>
<dbReference type="Pfam" id="PF15974">
    <property type="entry name" value="Cadherin_tail"/>
    <property type="match status" value="1"/>
</dbReference>
<dbReference type="PRINTS" id="PR00205">
    <property type="entry name" value="CADHERIN"/>
</dbReference>
<dbReference type="SMART" id="SM00112">
    <property type="entry name" value="CA"/>
    <property type="match status" value="6"/>
</dbReference>
<dbReference type="SUPFAM" id="SSF49313">
    <property type="entry name" value="Cadherin-like"/>
    <property type="match status" value="6"/>
</dbReference>
<dbReference type="PROSITE" id="PS00232">
    <property type="entry name" value="CADHERIN_1"/>
    <property type="match status" value="5"/>
</dbReference>
<dbReference type="PROSITE" id="PS50268">
    <property type="entry name" value="CADHERIN_2"/>
    <property type="match status" value="6"/>
</dbReference>
<organism>
    <name type="scientific">Homo sapiens</name>
    <name type="common">Human</name>
    <dbReference type="NCBI Taxonomy" id="9606"/>
    <lineage>
        <taxon>Eukaryota</taxon>
        <taxon>Metazoa</taxon>
        <taxon>Chordata</taxon>
        <taxon>Craniata</taxon>
        <taxon>Vertebrata</taxon>
        <taxon>Euteleostomi</taxon>
        <taxon>Mammalia</taxon>
        <taxon>Eutheria</taxon>
        <taxon>Euarchontoglires</taxon>
        <taxon>Primates</taxon>
        <taxon>Haplorrhini</taxon>
        <taxon>Catarrhini</taxon>
        <taxon>Hominidae</taxon>
        <taxon>Homo</taxon>
    </lineage>
</organism>
<feature type="signal peptide" evidence="2">
    <location>
        <begin position="1"/>
        <end position="29"/>
    </location>
</feature>
<feature type="chain" id="PRO_0000003968" description="Protocadherin gamma-A11">
    <location>
        <begin position="30"/>
        <end position="935"/>
    </location>
</feature>
<feature type="topological domain" description="Extracellular" evidence="2">
    <location>
        <begin position="30"/>
        <end position="693"/>
    </location>
</feature>
<feature type="transmembrane region" description="Helical" evidence="2">
    <location>
        <begin position="694"/>
        <end position="714"/>
    </location>
</feature>
<feature type="topological domain" description="Cytoplasmic" evidence="2">
    <location>
        <begin position="715"/>
        <end position="935"/>
    </location>
</feature>
<feature type="domain" description="Cadherin 1" evidence="3">
    <location>
        <begin position="30"/>
        <end position="134"/>
    </location>
</feature>
<feature type="domain" description="Cadherin 2" evidence="3">
    <location>
        <begin position="135"/>
        <end position="243"/>
    </location>
</feature>
<feature type="domain" description="Cadherin 3" evidence="3">
    <location>
        <begin position="244"/>
        <end position="348"/>
    </location>
</feature>
<feature type="domain" description="Cadherin 4" evidence="3">
    <location>
        <begin position="349"/>
        <end position="453"/>
    </location>
</feature>
<feature type="domain" description="Cadherin 5" evidence="3">
    <location>
        <begin position="454"/>
        <end position="563"/>
    </location>
</feature>
<feature type="domain" description="Cadherin 6" evidence="3">
    <location>
        <begin position="571"/>
        <end position="677"/>
    </location>
</feature>
<feature type="region of interest" description="Disordered" evidence="4">
    <location>
        <begin position="805"/>
        <end position="844"/>
    </location>
</feature>
<feature type="region of interest" description="Disordered" evidence="4">
    <location>
        <begin position="905"/>
        <end position="935"/>
    </location>
</feature>
<feature type="compositionally biased region" description="Polar residues" evidence="4">
    <location>
        <begin position="807"/>
        <end position="844"/>
    </location>
</feature>
<feature type="compositionally biased region" description="Basic residues" evidence="4">
    <location>
        <begin position="925"/>
        <end position="935"/>
    </location>
</feature>
<feature type="glycosylation site" description="N-linked (GlcNAc...) asparagine" evidence="2">
    <location>
        <position position="48"/>
    </location>
</feature>
<feature type="glycosylation site" description="N-linked (GlcNAc...) asparagine" evidence="2">
    <location>
        <position position="255"/>
    </location>
</feature>
<feature type="glycosylation site" description="N-linked (GlcNAc...) asparagine" evidence="2">
    <location>
        <position position="266"/>
    </location>
</feature>
<feature type="glycosylation site" description="N-linked (GlcNAc...) asparagine" evidence="2">
    <location>
        <position position="420"/>
    </location>
</feature>
<feature type="glycosylation site" description="N-linked (GlcNAc...) asparagine" evidence="2">
    <location>
        <position position="546"/>
    </location>
</feature>
<feature type="splice variant" id="VSP_008679" description="In isoform 3." evidence="5">
    <location>
        <begin position="627"/>
        <end position="811"/>
    </location>
</feature>
<feature type="splice variant" id="VSP_008680" description="In isoform 2." evidence="5">
    <original>QAPPNTDWRFSQAQRPGTSGSQNGDD</original>
    <variation>VRFISLPPNCWCLGTSLLRRCFLSLL</variation>
    <location>
        <begin position="812"/>
        <end position="837"/>
    </location>
</feature>
<feature type="splice variant" id="VSP_008681" description="In isoform 2." evidence="5">
    <location>
        <begin position="838"/>
        <end position="935"/>
    </location>
</feature>
<feature type="sequence variant" id="VAR_033711" description="In dbSNP:rs11167744.">
    <original>F</original>
    <variation>L</variation>
    <location>
        <position position="104"/>
    </location>
</feature>
<keyword id="KW-0025">Alternative splicing</keyword>
<keyword id="KW-0106">Calcium</keyword>
<keyword id="KW-0130">Cell adhesion</keyword>
<keyword id="KW-1003">Cell membrane</keyword>
<keyword id="KW-0325">Glycoprotein</keyword>
<keyword id="KW-0472">Membrane</keyword>
<keyword id="KW-1267">Proteomics identification</keyword>
<keyword id="KW-1185">Reference proteome</keyword>
<keyword id="KW-0677">Repeat</keyword>
<keyword id="KW-0732">Signal</keyword>
<keyword id="KW-0812">Transmembrane</keyword>
<keyword id="KW-1133">Transmembrane helix</keyword>